<organism>
    <name type="scientific">Escherichia coli (strain K12)</name>
    <dbReference type="NCBI Taxonomy" id="83333"/>
    <lineage>
        <taxon>Bacteria</taxon>
        <taxon>Pseudomonadati</taxon>
        <taxon>Pseudomonadota</taxon>
        <taxon>Gammaproteobacteria</taxon>
        <taxon>Enterobacterales</taxon>
        <taxon>Enterobacteriaceae</taxon>
        <taxon>Escherichia</taxon>
    </lineage>
</organism>
<keyword id="KW-0997">Cell inner membrane</keyword>
<keyword id="KW-1003">Cell membrane</keyword>
<keyword id="KW-0472">Membrane</keyword>
<keyword id="KW-1185">Reference proteome</keyword>
<keyword id="KW-0769">Symport</keyword>
<keyword id="KW-0812">Transmembrane</keyword>
<keyword id="KW-1133">Transmembrane helix</keyword>
<keyword id="KW-0813">Transport</keyword>
<accession>P76350</accession>
<proteinExistence type="evidence at transcript level"/>
<evidence type="ECO:0000255" key="1"/>
<evidence type="ECO:0000269" key="2">
    <source>
    </source>
</evidence>
<evidence type="ECO:0000269" key="3">
    <source>
    </source>
</evidence>
<evidence type="ECO:0000269" key="4">
    <source>
    </source>
</evidence>
<evidence type="ECO:0000303" key="5">
    <source>
    </source>
</evidence>
<evidence type="ECO:0000303" key="6">
    <source>
    </source>
</evidence>
<evidence type="ECO:0000305" key="7"/>
<name>SHIA_ECOLI</name>
<gene>
    <name evidence="6" type="primary">shiA</name>
    <name type="synonym">yeeM</name>
    <name type="ordered locus">b1981</name>
    <name type="ordered locus">JW1962</name>
</gene>
<feature type="chain" id="PRO_0000050336" description="Shikimate transporter">
    <location>
        <begin position="1"/>
        <end position="438"/>
    </location>
</feature>
<feature type="transmembrane region" description="Helical" evidence="1">
    <location>
        <begin position="28"/>
        <end position="48"/>
    </location>
</feature>
<feature type="transmembrane region" description="Helical" evidence="1">
    <location>
        <begin position="64"/>
        <end position="84"/>
    </location>
</feature>
<feature type="transmembrane region" description="Helical" evidence="1">
    <location>
        <begin position="109"/>
        <end position="129"/>
    </location>
</feature>
<feature type="transmembrane region" description="Helical" evidence="1">
    <location>
        <begin position="133"/>
        <end position="153"/>
    </location>
</feature>
<feature type="transmembrane region" description="Helical" evidence="1">
    <location>
        <begin position="168"/>
        <end position="188"/>
    </location>
</feature>
<feature type="transmembrane region" description="Helical" evidence="1">
    <location>
        <begin position="193"/>
        <end position="213"/>
    </location>
</feature>
<feature type="transmembrane region" description="Helical" evidence="1">
    <location>
        <begin position="255"/>
        <end position="275"/>
    </location>
</feature>
<feature type="transmembrane region" description="Helical" evidence="1">
    <location>
        <begin position="287"/>
        <end position="307"/>
    </location>
</feature>
<feature type="transmembrane region" description="Helical" evidence="1">
    <location>
        <begin position="318"/>
        <end position="337"/>
    </location>
</feature>
<feature type="transmembrane region" description="Helical" evidence="1">
    <location>
        <begin position="341"/>
        <end position="363"/>
    </location>
</feature>
<feature type="transmembrane region" description="Helical" evidence="1">
    <location>
        <begin position="387"/>
        <end position="407"/>
    </location>
</feature>
<feature type="transmembrane region" description="Helical" evidence="1">
    <location>
        <begin position="411"/>
        <end position="431"/>
    </location>
</feature>
<dbReference type="EMBL" id="U88529">
    <property type="protein sequence ID" value="AAC46271.1"/>
    <property type="molecule type" value="Genomic_DNA"/>
</dbReference>
<dbReference type="EMBL" id="U00096">
    <property type="protein sequence ID" value="AAC75045.1"/>
    <property type="molecule type" value="Genomic_DNA"/>
</dbReference>
<dbReference type="EMBL" id="AP009048">
    <property type="protein sequence ID" value="BAA15801.1"/>
    <property type="molecule type" value="Genomic_DNA"/>
</dbReference>
<dbReference type="PIR" id="G64962">
    <property type="entry name" value="G64962"/>
</dbReference>
<dbReference type="RefSeq" id="NP_416488.1">
    <property type="nucleotide sequence ID" value="NC_000913.3"/>
</dbReference>
<dbReference type="RefSeq" id="WP_000378575.1">
    <property type="nucleotide sequence ID" value="NZ_LN832404.1"/>
</dbReference>
<dbReference type="SMR" id="P76350"/>
<dbReference type="BioGRID" id="4260400">
    <property type="interactions" value="9"/>
</dbReference>
<dbReference type="FunCoup" id="P76350">
    <property type="interactions" value="7"/>
</dbReference>
<dbReference type="STRING" id="511145.b1981"/>
<dbReference type="TCDB" id="2.A.1.6.6">
    <property type="family name" value="the major facilitator superfamily (mfs)"/>
</dbReference>
<dbReference type="PaxDb" id="511145-b1981"/>
<dbReference type="EnsemblBacteria" id="AAC75045">
    <property type="protein sequence ID" value="AAC75045"/>
    <property type="gene ID" value="b1981"/>
</dbReference>
<dbReference type="GeneID" id="75202786"/>
<dbReference type="GeneID" id="946495"/>
<dbReference type="KEGG" id="ecj:JW1962"/>
<dbReference type="KEGG" id="eco:b1981"/>
<dbReference type="KEGG" id="ecoc:C3026_11185"/>
<dbReference type="PATRIC" id="fig|1411691.4.peg.270"/>
<dbReference type="EchoBASE" id="EB4148"/>
<dbReference type="eggNOG" id="COG0477">
    <property type="taxonomic scope" value="Bacteria"/>
</dbReference>
<dbReference type="HOGENOM" id="CLU_001265_39_5_6"/>
<dbReference type="InParanoid" id="P76350"/>
<dbReference type="OMA" id="IKKQWKN"/>
<dbReference type="OrthoDB" id="3690818at2"/>
<dbReference type="PhylomeDB" id="P76350"/>
<dbReference type="BioCyc" id="EcoCyc:SHIA-MONOMER"/>
<dbReference type="BioCyc" id="MetaCyc:SHIA-MONOMER"/>
<dbReference type="PRO" id="PR:P76350"/>
<dbReference type="Proteomes" id="UP000000625">
    <property type="component" value="Chromosome"/>
</dbReference>
<dbReference type="GO" id="GO:0005886">
    <property type="term" value="C:plasma membrane"/>
    <property type="evidence" value="ECO:0000314"/>
    <property type="project" value="EcoCyc"/>
</dbReference>
<dbReference type="GO" id="GO:0015530">
    <property type="term" value="F:shikimate transmembrane transporter activity"/>
    <property type="evidence" value="ECO:0000315"/>
    <property type="project" value="EcoCyc"/>
</dbReference>
<dbReference type="GO" id="GO:0015293">
    <property type="term" value="F:symporter activity"/>
    <property type="evidence" value="ECO:0007669"/>
    <property type="project" value="UniProtKB-KW"/>
</dbReference>
<dbReference type="GO" id="GO:0015733">
    <property type="term" value="P:shikimate transmembrane transport"/>
    <property type="evidence" value="ECO:0000315"/>
    <property type="project" value="EcoCyc"/>
</dbReference>
<dbReference type="CDD" id="cd17369">
    <property type="entry name" value="MFS_ShiA_like"/>
    <property type="match status" value="1"/>
</dbReference>
<dbReference type="FunFam" id="1.20.1250.20:FF:000001">
    <property type="entry name" value="Dicarboxylate MFS transporter"/>
    <property type="match status" value="1"/>
</dbReference>
<dbReference type="FunFam" id="1.20.1250.20:FF:000201">
    <property type="entry name" value="Shikimate transporter"/>
    <property type="match status" value="1"/>
</dbReference>
<dbReference type="Gene3D" id="1.20.1250.20">
    <property type="entry name" value="MFS general substrate transporter like domains"/>
    <property type="match status" value="2"/>
</dbReference>
<dbReference type="InterPro" id="IPR011701">
    <property type="entry name" value="MFS"/>
</dbReference>
<dbReference type="InterPro" id="IPR020846">
    <property type="entry name" value="MFS_dom"/>
</dbReference>
<dbReference type="InterPro" id="IPR005828">
    <property type="entry name" value="MFS_sugar_transport-like"/>
</dbReference>
<dbReference type="InterPro" id="IPR036259">
    <property type="entry name" value="MFS_trans_sf"/>
</dbReference>
<dbReference type="InterPro" id="IPR004736">
    <property type="entry name" value="MHS_symport"/>
</dbReference>
<dbReference type="InterPro" id="IPR005829">
    <property type="entry name" value="Sugar_transporter_CS"/>
</dbReference>
<dbReference type="NCBIfam" id="TIGR00883">
    <property type="entry name" value="2A0106"/>
    <property type="match status" value="1"/>
</dbReference>
<dbReference type="NCBIfam" id="NF007414">
    <property type="entry name" value="PRK09952.1"/>
    <property type="match status" value="1"/>
</dbReference>
<dbReference type="PANTHER" id="PTHR43045">
    <property type="entry name" value="SHIKIMATE TRANSPORTER"/>
    <property type="match status" value="1"/>
</dbReference>
<dbReference type="PANTHER" id="PTHR43045:SF1">
    <property type="entry name" value="SHIKIMATE TRANSPORTER"/>
    <property type="match status" value="1"/>
</dbReference>
<dbReference type="Pfam" id="PF07690">
    <property type="entry name" value="MFS_1"/>
    <property type="match status" value="1"/>
</dbReference>
<dbReference type="Pfam" id="PF00083">
    <property type="entry name" value="Sugar_tr"/>
    <property type="match status" value="1"/>
</dbReference>
<dbReference type="SUPFAM" id="SSF103473">
    <property type="entry name" value="MFS general substrate transporter"/>
    <property type="match status" value="1"/>
</dbReference>
<dbReference type="PROSITE" id="PS50850">
    <property type="entry name" value="MFS"/>
    <property type="match status" value="1"/>
</dbReference>
<dbReference type="PROSITE" id="PS00217">
    <property type="entry name" value="SUGAR_TRANSPORT_2"/>
    <property type="match status" value="1"/>
</dbReference>
<comment type="function">
    <text evidence="4">Involved in the uptake of shikimate, an intermediate in the aromatic amino acid biosynthetic pathway.</text>
</comment>
<comment type="catalytic activity">
    <reaction evidence="7">
        <text>shikimate(in) + H(+)(in) = shikimate(out) + H(+)(out)</text>
        <dbReference type="Rhea" id="RHEA:28971"/>
        <dbReference type="ChEBI" id="CHEBI:15378"/>
        <dbReference type="ChEBI" id="CHEBI:36208"/>
    </reaction>
    <physiologicalReaction direction="right-to-left" evidence="7">
        <dbReference type="Rhea" id="RHEA:28973"/>
    </physiologicalReaction>
</comment>
<comment type="subcellular location">
    <subcellularLocation>
        <location evidence="2">Cell inner membrane</location>
        <topology evidence="1">Multi-pass membrane protein</topology>
    </subcellularLocation>
</comment>
<comment type="induction">
    <text evidence="3 4">The translation of shiA mRNA is activated by the small RNA (sRNA) RyhB (PubMed:17542919). In the presence of the RNA chaperone Hfq, shiA mRNA forms an inhibitory structure that blocks the translation initiation (PubMed:17542919). However, when RyhB is expressed, it pairs with the 5'-untranslated region (5'-UTR) of the shiA mRNA to prevent the formation of this inhibitory structure, which allows translation to proceed and synthesis of the shikimate permease (PubMed:17542919). Expression does not appear to be regulated by the TyrR protein, a repressor/activator that controls the expression of other genes involved in the biosynthesis or transport of the aromatic amino acids (PubMed:9524262).</text>
</comment>
<comment type="disruption phenotype">
    <text evidence="4">Disruption of the gene abolishes shikimate uptake.</text>
</comment>
<comment type="similarity">
    <text evidence="7">Belongs to the major facilitator superfamily. Metabolite:H+ Symporter (MHS) family (TC 2.A.1.6) family.</text>
</comment>
<sequence length="438" mass="47817">MDSTLISTRPDEGTLSLSRARRAALGSFAGAVVDWYDFLLYGITAALVFNREFFPQVSPAMGTLAAFATFGVGFLFRPLGGVIFGHFGDRLGRKRMLMLTVWMMGIATALIGILPSFSTIGWWAPILLVTLRAIQGFAVGGEWGGAALLSVESAPKNKKAFYSSGVQVGYGVGLLLSTGLVSLISMMTTDEQFLSWGWRIPFLFSIVLVLGALWVRNGMEESAEFEQQQHYQAAAKKRIPVIEALLRHPGAFLKIIALRLCELLTMYIVTAFALNYSTQNMGLPRELFLNIGLLVGGLSCLTIPCFAWLADRFGRRRVYITGTLIGTLSAFPFFMALEAQSIFWIVFFSIMLANIAHDMVVCVQQPMFTEMFGASYRYSGAGVGYQVASVVGGGFTPFIAAALITYFAGNWHSVAIYLLAGCLISAMTALLMKDSQRA</sequence>
<protein>
    <recommendedName>
        <fullName evidence="7">Shikimate transporter</fullName>
    </recommendedName>
    <alternativeName>
        <fullName evidence="5">Shikimate permease</fullName>
    </alternativeName>
</protein>
<reference key="1">
    <citation type="journal article" date="1998" name="Gene">
        <title>Cloning and analysis of the shiA gene, which encodes the shikimate transport system of Escherichia coli K-12.</title>
        <authorList>
            <person name="Whipp M.J."/>
            <person name="Camakaris H."/>
            <person name="Pittard A.J."/>
        </authorList>
    </citation>
    <scope>NUCLEOTIDE SEQUENCE [GENOMIC DNA]</scope>
    <scope>FUNCTION</scope>
    <scope>TRANSCRIPTIONAL REGULATION</scope>
    <scope>DISRUPTION PHENOTYPE</scope>
    <source>
        <strain>K12</strain>
    </source>
</reference>
<reference key="2">
    <citation type="journal article" date="1996" name="DNA Res.">
        <title>A 460-kb DNA sequence of the Escherichia coli K-12 genome corresponding to the 40.1-50.0 min region on the linkage map.</title>
        <authorList>
            <person name="Itoh T."/>
            <person name="Aiba H."/>
            <person name="Baba T."/>
            <person name="Fujita K."/>
            <person name="Hayashi K."/>
            <person name="Inada T."/>
            <person name="Isono K."/>
            <person name="Kasai H."/>
            <person name="Kimura S."/>
            <person name="Kitakawa M."/>
            <person name="Kitagawa M."/>
            <person name="Makino K."/>
            <person name="Miki T."/>
            <person name="Mizobuchi K."/>
            <person name="Mori H."/>
            <person name="Mori T."/>
            <person name="Motomura K."/>
            <person name="Nakade S."/>
            <person name="Nakamura Y."/>
            <person name="Nashimoto H."/>
            <person name="Nishio Y."/>
            <person name="Oshima T."/>
            <person name="Saito N."/>
            <person name="Sampei G."/>
            <person name="Seki Y."/>
            <person name="Sivasundaram S."/>
            <person name="Tagami H."/>
            <person name="Takeda J."/>
            <person name="Takemoto K."/>
            <person name="Wada C."/>
            <person name="Yamamoto Y."/>
            <person name="Horiuchi T."/>
        </authorList>
    </citation>
    <scope>NUCLEOTIDE SEQUENCE [LARGE SCALE GENOMIC DNA]</scope>
    <source>
        <strain>K12 / W3110 / ATCC 27325 / DSM 5911</strain>
    </source>
</reference>
<reference key="3">
    <citation type="journal article" date="1997" name="Science">
        <title>The complete genome sequence of Escherichia coli K-12.</title>
        <authorList>
            <person name="Blattner F.R."/>
            <person name="Plunkett G. III"/>
            <person name="Bloch C.A."/>
            <person name="Perna N.T."/>
            <person name="Burland V."/>
            <person name="Riley M."/>
            <person name="Collado-Vides J."/>
            <person name="Glasner J.D."/>
            <person name="Rode C.K."/>
            <person name="Mayhew G.F."/>
            <person name="Gregor J."/>
            <person name="Davis N.W."/>
            <person name="Kirkpatrick H.A."/>
            <person name="Goeden M.A."/>
            <person name="Rose D.J."/>
            <person name="Mau B."/>
            <person name="Shao Y."/>
        </authorList>
    </citation>
    <scope>NUCLEOTIDE SEQUENCE [LARGE SCALE GENOMIC DNA]</scope>
    <source>
        <strain>K12 / MG1655 / ATCC 47076</strain>
    </source>
</reference>
<reference key="4">
    <citation type="journal article" date="2006" name="Mol. Syst. Biol.">
        <title>Highly accurate genome sequences of Escherichia coli K-12 strains MG1655 and W3110.</title>
        <authorList>
            <person name="Hayashi K."/>
            <person name="Morooka N."/>
            <person name="Yamamoto Y."/>
            <person name="Fujita K."/>
            <person name="Isono K."/>
            <person name="Choi S."/>
            <person name="Ohtsubo E."/>
            <person name="Baba T."/>
            <person name="Wanner B.L."/>
            <person name="Mori H."/>
            <person name="Horiuchi T."/>
        </authorList>
    </citation>
    <scope>NUCLEOTIDE SEQUENCE [LARGE SCALE GENOMIC DNA]</scope>
    <source>
        <strain>K12 / W3110 / ATCC 27325 / DSM 5911</strain>
    </source>
</reference>
<reference key="5">
    <citation type="journal article" date="2005" name="Science">
        <title>Global topology analysis of the Escherichia coli inner membrane proteome.</title>
        <authorList>
            <person name="Daley D.O."/>
            <person name="Rapp M."/>
            <person name="Granseth E."/>
            <person name="Melen K."/>
            <person name="Drew D."/>
            <person name="von Heijne G."/>
        </authorList>
    </citation>
    <scope>SUBCELLULAR LOCATION</scope>
    <source>
        <strain>K12 / MG1655 / ATCC 47076</strain>
    </source>
</reference>
<reference key="6">
    <citation type="journal article" date="2007" name="Mol. Microbiol.">
        <title>The small RNA RyhB activates the translation of shiA mRNA encoding a permease of shikimate, a compound involved in siderophore synthesis.</title>
        <authorList>
            <person name="Prevost K."/>
            <person name="Salvail H."/>
            <person name="Desnoyers G."/>
            <person name="Jacques J.F."/>
            <person name="Phaneuf E."/>
            <person name="Masse E."/>
        </authorList>
    </citation>
    <scope>TRANSLATIONAL REGULATION</scope>
    <source>
        <strain>K12 / MG1655 / ATCC 47076</strain>
    </source>
</reference>